<reference key="1">
    <citation type="journal article" date="1999" name="Nature">
        <title>Sequence and analysis of chromosome 4 of the plant Arabidopsis thaliana.</title>
        <authorList>
            <person name="Mayer K.F.X."/>
            <person name="Schueller C."/>
            <person name="Wambutt R."/>
            <person name="Murphy G."/>
            <person name="Volckaert G."/>
            <person name="Pohl T."/>
            <person name="Duesterhoeft A."/>
            <person name="Stiekema W."/>
            <person name="Entian K.-D."/>
            <person name="Terryn N."/>
            <person name="Harris B."/>
            <person name="Ansorge W."/>
            <person name="Brandt P."/>
            <person name="Grivell L.A."/>
            <person name="Rieger M."/>
            <person name="Weichselgartner M."/>
            <person name="de Simone V."/>
            <person name="Obermaier B."/>
            <person name="Mache R."/>
            <person name="Mueller M."/>
            <person name="Kreis M."/>
            <person name="Delseny M."/>
            <person name="Puigdomenech P."/>
            <person name="Watson M."/>
            <person name="Schmidtheini T."/>
            <person name="Reichert B."/>
            <person name="Portetelle D."/>
            <person name="Perez-Alonso M."/>
            <person name="Boutry M."/>
            <person name="Bancroft I."/>
            <person name="Vos P."/>
            <person name="Hoheisel J."/>
            <person name="Zimmermann W."/>
            <person name="Wedler H."/>
            <person name="Ridley P."/>
            <person name="Langham S.-A."/>
            <person name="McCullagh B."/>
            <person name="Bilham L."/>
            <person name="Robben J."/>
            <person name="van der Schueren J."/>
            <person name="Grymonprez B."/>
            <person name="Chuang Y.-J."/>
            <person name="Vandenbussche F."/>
            <person name="Braeken M."/>
            <person name="Weltjens I."/>
            <person name="Voet M."/>
            <person name="Bastiaens I."/>
            <person name="Aert R."/>
            <person name="Defoor E."/>
            <person name="Weitzenegger T."/>
            <person name="Bothe G."/>
            <person name="Ramsperger U."/>
            <person name="Hilbert H."/>
            <person name="Braun M."/>
            <person name="Holzer E."/>
            <person name="Brandt A."/>
            <person name="Peters S."/>
            <person name="van Staveren M."/>
            <person name="Dirkse W."/>
            <person name="Mooijman P."/>
            <person name="Klein Lankhorst R."/>
            <person name="Rose M."/>
            <person name="Hauf J."/>
            <person name="Koetter P."/>
            <person name="Berneiser S."/>
            <person name="Hempel S."/>
            <person name="Feldpausch M."/>
            <person name="Lamberth S."/>
            <person name="Van den Daele H."/>
            <person name="De Keyser A."/>
            <person name="Buysshaert C."/>
            <person name="Gielen J."/>
            <person name="Villarroel R."/>
            <person name="De Clercq R."/>
            <person name="van Montagu M."/>
            <person name="Rogers J."/>
            <person name="Cronin A."/>
            <person name="Quail M.A."/>
            <person name="Bray-Allen S."/>
            <person name="Clark L."/>
            <person name="Doggett J."/>
            <person name="Hall S."/>
            <person name="Kay M."/>
            <person name="Lennard N."/>
            <person name="McLay K."/>
            <person name="Mayes R."/>
            <person name="Pettett A."/>
            <person name="Rajandream M.A."/>
            <person name="Lyne M."/>
            <person name="Benes V."/>
            <person name="Rechmann S."/>
            <person name="Borkova D."/>
            <person name="Bloecker H."/>
            <person name="Scharfe M."/>
            <person name="Grimm M."/>
            <person name="Loehnert T.-H."/>
            <person name="Dose S."/>
            <person name="de Haan M."/>
            <person name="Maarse A.C."/>
            <person name="Schaefer M."/>
            <person name="Mueller-Auer S."/>
            <person name="Gabel C."/>
            <person name="Fuchs M."/>
            <person name="Fartmann B."/>
            <person name="Granderath K."/>
            <person name="Dauner D."/>
            <person name="Herzl A."/>
            <person name="Neumann S."/>
            <person name="Argiriou A."/>
            <person name="Vitale D."/>
            <person name="Liguori R."/>
            <person name="Piravandi E."/>
            <person name="Massenet O."/>
            <person name="Quigley F."/>
            <person name="Clabauld G."/>
            <person name="Muendlein A."/>
            <person name="Felber R."/>
            <person name="Schnabl S."/>
            <person name="Hiller R."/>
            <person name="Schmidt W."/>
            <person name="Lecharny A."/>
            <person name="Aubourg S."/>
            <person name="Chefdor F."/>
            <person name="Cooke R."/>
            <person name="Berger C."/>
            <person name="Monfort A."/>
            <person name="Casacuberta E."/>
            <person name="Gibbons T."/>
            <person name="Weber N."/>
            <person name="Vandenbol M."/>
            <person name="Bargues M."/>
            <person name="Terol J."/>
            <person name="Torres A."/>
            <person name="Perez-Perez A."/>
            <person name="Purnelle B."/>
            <person name="Bent E."/>
            <person name="Johnson S."/>
            <person name="Tacon D."/>
            <person name="Jesse T."/>
            <person name="Heijnen L."/>
            <person name="Schwarz S."/>
            <person name="Scholler P."/>
            <person name="Heber S."/>
            <person name="Francs P."/>
            <person name="Bielke C."/>
            <person name="Frishman D."/>
            <person name="Haase D."/>
            <person name="Lemcke K."/>
            <person name="Mewes H.-W."/>
            <person name="Stocker S."/>
            <person name="Zaccaria P."/>
            <person name="Bevan M."/>
            <person name="Wilson R.K."/>
            <person name="de la Bastide M."/>
            <person name="Habermann K."/>
            <person name="Parnell L."/>
            <person name="Dedhia N."/>
            <person name="Gnoj L."/>
            <person name="Schutz K."/>
            <person name="Huang E."/>
            <person name="Spiegel L."/>
            <person name="Sekhon M."/>
            <person name="Murray J."/>
            <person name="Sheet P."/>
            <person name="Cordes M."/>
            <person name="Abu-Threideh J."/>
            <person name="Stoneking T."/>
            <person name="Kalicki J."/>
            <person name="Graves T."/>
            <person name="Harmon G."/>
            <person name="Edwards J."/>
            <person name="Latreille P."/>
            <person name="Courtney L."/>
            <person name="Cloud J."/>
            <person name="Abbott A."/>
            <person name="Scott K."/>
            <person name="Johnson D."/>
            <person name="Minx P."/>
            <person name="Bentley D."/>
            <person name="Fulton B."/>
            <person name="Miller N."/>
            <person name="Greco T."/>
            <person name="Kemp K."/>
            <person name="Kramer J."/>
            <person name="Fulton L."/>
            <person name="Mardis E."/>
            <person name="Dante M."/>
            <person name="Pepin K."/>
            <person name="Hillier L.W."/>
            <person name="Nelson J."/>
            <person name="Spieth J."/>
            <person name="Ryan E."/>
            <person name="Andrews S."/>
            <person name="Geisel C."/>
            <person name="Layman D."/>
            <person name="Du H."/>
            <person name="Ali J."/>
            <person name="Berghoff A."/>
            <person name="Jones K."/>
            <person name="Drone K."/>
            <person name="Cotton M."/>
            <person name="Joshu C."/>
            <person name="Antonoiu B."/>
            <person name="Zidanic M."/>
            <person name="Strong C."/>
            <person name="Sun H."/>
            <person name="Lamar B."/>
            <person name="Yordan C."/>
            <person name="Ma P."/>
            <person name="Zhong J."/>
            <person name="Preston R."/>
            <person name="Vil D."/>
            <person name="Shekher M."/>
            <person name="Matero A."/>
            <person name="Shah R."/>
            <person name="Swaby I.K."/>
            <person name="O'Shaughnessy A."/>
            <person name="Rodriguez M."/>
            <person name="Hoffman J."/>
            <person name="Till S."/>
            <person name="Granat S."/>
            <person name="Shohdy N."/>
            <person name="Hasegawa A."/>
            <person name="Hameed A."/>
            <person name="Lodhi M."/>
            <person name="Johnson A."/>
            <person name="Chen E."/>
            <person name="Marra M.A."/>
            <person name="Martienssen R."/>
            <person name="McCombie W.R."/>
        </authorList>
    </citation>
    <scope>NUCLEOTIDE SEQUENCE [LARGE SCALE GENOMIC DNA]</scope>
    <source>
        <strain>cv. Columbia</strain>
    </source>
</reference>
<reference key="2">
    <citation type="journal article" date="2017" name="Plant J.">
        <title>Araport11: a complete reannotation of the Arabidopsis thaliana reference genome.</title>
        <authorList>
            <person name="Cheng C.Y."/>
            <person name="Krishnakumar V."/>
            <person name="Chan A.P."/>
            <person name="Thibaud-Nissen F."/>
            <person name="Schobel S."/>
            <person name="Town C.D."/>
        </authorList>
    </citation>
    <scope>GENOME REANNOTATION</scope>
    <source>
        <strain>cv. Columbia</strain>
    </source>
</reference>
<reference key="3">
    <citation type="journal article" date="2003" name="Science">
        <title>Empirical analysis of transcriptional activity in the Arabidopsis genome.</title>
        <authorList>
            <person name="Yamada K."/>
            <person name="Lim J."/>
            <person name="Dale J.M."/>
            <person name="Chen H."/>
            <person name="Shinn P."/>
            <person name="Palm C.J."/>
            <person name="Southwick A.M."/>
            <person name="Wu H.C."/>
            <person name="Kim C.J."/>
            <person name="Nguyen M."/>
            <person name="Pham P.K."/>
            <person name="Cheuk R.F."/>
            <person name="Karlin-Newmann G."/>
            <person name="Liu S.X."/>
            <person name="Lam B."/>
            <person name="Sakano H."/>
            <person name="Wu T."/>
            <person name="Yu G."/>
            <person name="Miranda M."/>
            <person name="Quach H.L."/>
            <person name="Tripp M."/>
            <person name="Chang C.H."/>
            <person name="Lee J.M."/>
            <person name="Toriumi M.J."/>
            <person name="Chan M.M."/>
            <person name="Tang C.C."/>
            <person name="Onodera C.S."/>
            <person name="Deng J.M."/>
            <person name="Akiyama K."/>
            <person name="Ansari Y."/>
            <person name="Arakawa T."/>
            <person name="Banh J."/>
            <person name="Banno F."/>
            <person name="Bowser L."/>
            <person name="Brooks S.Y."/>
            <person name="Carninci P."/>
            <person name="Chao Q."/>
            <person name="Choy N."/>
            <person name="Enju A."/>
            <person name="Goldsmith A.D."/>
            <person name="Gurjal M."/>
            <person name="Hansen N.F."/>
            <person name="Hayashizaki Y."/>
            <person name="Johnson-Hopson C."/>
            <person name="Hsuan V.W."/>
            <person name="Iida K."/>
            <person name="Karnes M."/>
            <person name="Khan S."/>
            <person name="Koesema E."/>
            <person name="Ishida J."/>
            <person name="Jiang P.X."/>
            <person name="Jones T."/>
            <person name="Kawai J."/>
            <person name="Kamiya A."/>
            <person name="Meyers C."/>
            <person name="Nakajima M."/>
            <person name="Narusaka M."/>
            <person name="Seki M."/>
            <person name="Sakurai T."/>
            <person name="Satou M."/>
            <person name="Tamse R."/>
            <person name="Vaysberg M."/>
            <person name="Wallender E.K."/>
            <person name="Wong C."/>
            <person name="Yamamura Y."/>
            <person name="Yuan S."/>
            <person name="Shinozaki K."/>
            <person name="Davis R.W."/>
            <person name="Theologis A."/>
            <person name="Ecker J.R."/>
        </authorList>
    </citation>
    <scope>NUCLEOTIDE SEQUENCE [LARGE SCALE MRNA]</scope>
    <source>
        <strain>cv. Columbia</strain>
    </source>
</reference>
<comment type="function">
    <text evidence="1">S-adenosyl-L-methionine-dependent transferase that acts as a component of the wybutosine biosynthesis pathway. Wybutosine is a hyper modified guanosine with a tricyclic base found at the 3'-position adjacent to the anticodon of eukaryotic phenylalanine tRNA (By similarity).</text>
</comment>
<comment type="catalytic activity">
    <reaction>
        <text>4-demethyl-7-[(3S)-3-amino-3-carboxypropyl]wyosine(37) in tRNA(Phe) + S-adenosyl-L-methionine = 7-[(3S)-3-amino-3-carboxypropyl]wyosine(37) in tRNA(Phe) + S-adenosyl-L-homocysteine + H(+)</text>
        <dbReference type="Rhea" id="RHEA:36635"/>
        <dbReference type="Rhea" id="RHEA-COMP:10378"/>
        <dbReference type="Rhea" id="RHEA-COMP:10379"/>
        <dbReference type="ChEBI" id="CHEBI:15378"/>
        <dbReference type="ChEBI" id="CHEBI:57856"/>
        <dbReference type="ChEBI" id="CHEBI:59789"/>
        <dbReference type="ChEBI" id="CHEBI:73543"/>
        <dbReference type="ChEBI" id="CHEBI:73550"/>
        <dbReference type="EC" id="2.1.1.282"/>
    </reaction>
</comment>
<comment type="catalytic activity">
    <reaction>
        <text>4-demethylwyosine(37) in tRNA(Phe) + S-adenosyl-L-methionine = 4-demethyl-7-[(3S)-3-amino-3-carboxypropyl]wyosine(37) in tRNA(Phe) + S-methyl-5'-thioadenosine + H(+)</text>
        <dbReference type="Rhea" id="RHEA:36355"/>
        <dbReference type="Rhea" id="RHEA-COMP:10164"/>
        <dbReference type="Rhea" id="RHEA-COMP:10378"/>
        <dbReference type="ChEBI" id="CHEBI:15378"/>
        <dbReference type="ChEBI" id="CHEBI:17509"/>
        <dbReference type="ChEBI" id="CHEBI:59789"/>
        <dbReference type="ChEBI" id="CHEBI:64315"/>
        <dbReference type="ChEBI" id="CHEBI:73550"/>
        <dbReference type="EC" id="2.5.1.114"/>
    </reaction>
</comment>
<comment type="pathway">
    <text>tRNA modification; wybutosine-tRNA(Phe) biosynthesis.</text>
</comment>
<comment type="similarity">
    <text evidence="3">In the C-terminal section; belongs to the class I-like SAM-binding methyltransferase superfamily. TRM5/TYW2 family.</text>
</comment>
<comment type="similarity">
    <text evidence="3">In the N-terminal section; belongs to the TYW3 family.</text>
</comment>
<comment type="caution">
    <text evidence="3">In plants, methylation steps 2, 3 and 4 of wybutosine biosynthesis are probably processed by the this multifunctional enzyme, while in other eukaryotes, these steps are mediated by 3 different proteins.</text>
</comment>
<comment type="sequence caution" evidence="3">
    <conflict type="erroneous gene model prediction">
        <sequence resource="EMBL-CDS" id="AAD48952"/>
    </conflict>
</comment>
<comment type="sequence caution" evidence="3">
    <conflict type="erroneous gene model prediction">
        <sequence resource="EMBL-CDS" id="CAB80832"/>
    </conflict>
</comment>
<gene>
    <name type="ordered locus">At4g04670</name>
    <name type="ORF">T19J18.2</name>
</gene>
<feature type="chain" id="PRO_0000281849" description="tRNA wybutosine-synthesizing protein 2/3/4">
    <location>
        <begin position="1"/>
        <end position="995"/>
    </location>
</feature>
<feature type="repeat" description="Kelch 1">
    <location>
        <begin position="284"/>
        <end position="335"/>
    </location>
</feature>
<feature type="repeat" description="Kelch 2">
    <location>
        <begin position="336"/>
        <end position="386"/>
    </location>
</feature>
<feature type="repeat" description="Kelch 3">
    <location>
        <begin position="387"/>
        <end position="436"/>
    </location>
</feature>
<feature type="repeat" description="Kelch 4">
    <location>
        <begin position="437"/>
        <end position="486"/>
    </location>
</feature>
<feature type="repeat" description="Kelch 5">
    <location>
        <begin position="488"/>
        <end position="535"/>
    </location>
</feature>
<feature type="region of interest" description="tRNA wybutosine-synthesizing protein 3 homolog">
    <location>
        <begin position="1"/>
        <end position="212"/>
    </location>
</feature>
<feature type="region of interest" description="tRNA wybutosine-synthesizing protein 2 homolog">
    <location>
        <begin position="661"/>
        <end position="995"/>
    </location>
</feature>
<feature type="binding site" evidence="2">
    <location>
        <position position="828"/>
    </location>
    <ligand>
        <name>S-adenosyl-L-methionine</name>
        <dbReference type="ChEBI" id="CHEBI:59789"/>
    </ligand>
</feature>
<feature type="binding site" evidence="2">
    <location>
        <begin position="896"/>
        <end position="897"/>
    </location>
    <ligand>
        <name>S-adenosyl-L-methionine</name>
        <dbReference type="ChEBI" id="CHEBI:59789"/>
    </ligand>
</feature>
<keyword id="KW-0880">Kelch repeat</keyword>
<keyword id="KW-0489">Methyltransferase</keyword>
<keyword id="KW-0511">Multifunctional enzyme</keyword>
<keyword id="KW-1185">Reference proteome</keyword>
<keyword id="KW-0677">Repeat</keyword>
<keyword id="KW-0949">S-adenosyl-L-methionine</keyword>
<keyword id="KW-0808">Transferase</keyword>
<keyword id="KW-0819">tRNA processing</keyword>
<name>TYW23_ARATH</name>
<sequence>MDFEKRKAATLASIRSSVTDKSPKGFLDEPIIPLLETINHHPSYFTTSSCSGRISILSQPKPKSNDSTKKKARGGSWLYITHDPADSDLVISLLFPSKSNQIDPIDQPSELVFRFEPLIIAVECKDLGSAQFLVALAISAGFRESGITSCGDGKRVIIAIRCSIRMEVPIGDTEKLMVSPEYVKFLVDIANEKMDANRKRTDGFSVALASNGFKNPDENDVDEDDNYENLAANHDSSINNGNLYPGVQKELIPLEKLSIVGEPVEKLHLWGHSACTIDESDRKEVIVFGGFGGFGRHARRNESLLLNPSCGTLKLIAVNESPSARLGHTASMVGDFMFVIGGRADPLNILNDVWRLDISTGEWSSQRCVGSEFPPRHRHAAASVGTKVYIFGGLYNDKIVSSMHILDTKDLQWKEVEQQGQWPCARHSHAMVAYGSQSFMFGGYNGENVLNDLYSFDVQSCSWKLEVISGKWPHARFSHSMFVYKHTIGIIGGCPVSQNCQELTLLDLKHRLWRSVRLEFMNKELFVRSTASILGDDLIVIGGGAACYAFGTKFSEPVKINLVQSVTMSENHLPPQPEDVSLESNKNNADLKTETSLSQPWVIQLERKYAKFGKDILKSFGWLDLERKVYSNEKGLCICFPVTENFSELFHEKQLLGKDFERSEENNLTKGLSLKDISCSAALNLLKEHGAKKLINVAFEAKKVAKSPLQRMREDITSILKQKGLPEELLDELPQKWERLGDIVVVPATSFKDPTWSSINDEVWCAVSKSLSANRLARQGRVEPNGTRDSTLEILVGDNGWVNHRENGILYSFDATKCMFSWGNLSEKLRMGNMACENEVVVDLFAGIGYFVLPFLVRAKAKLVYACEWNPHAIEALRRNVEANSVSERCIILEGDNRITAPKGVADRVNLGLIPSSEGSWVTAIQALRPEGGILHVHGNVKDSDESSWGEHVTKTLSDIARAEGRSWEVTVEHIEKVKWYAPRIRHLVADVRCR</sequence>
<proteinExistence type="evidence at transcript level"/>
<evidence type="ECO:0000250" key="1"/>
<evidence type="ECO:0000255" key="2">
    <source>
        <dbReference type="PROSITE-ProRule" id="PRU01021"/>
    </source>
</evidence>
<evidence type="ECO:0000305" key="3"/>
<dbReference type="EC" id="2.1.1.282"/>
<dbReference type="EC" id="2.5.1.114"/>
<dbReference type="EMBL" id="AF149414">
    <property type="protein sequence ID" value="AAD48952.1"/>
    <property type="status" value="ALT_SEQ"/>
    <property type="molecule type" value="Genomic_DNA"/>
</dbReference>
<dbReference type="EMBL" id="AL161501">
    <property type="protein sequence ID" value="CAB80832.1"/>
    <property type="status" value="ALT_SEQ"/>
    <property type="molecule type" value="Genomic_DNA"/>
</dbReference>
<dbReference type="EMBL" id="CP002687">
    <property type="protein sequence ID" value="AEE82410.1"/>
    <property type="molecule type" value="Genomic_DNA"/>
</dbReference>
<dbReference type="EMBL" id="AY062510">
    <property type="protein sequence ID" value="AAL32588.1"/>
    <property type="molecule type" value="mRNA"/>
</dbReference>
<dbReference type="EMBL" id="BT008367">
    <property type="protein sequence ID" value="AAP37726.1"/>
    <property type="molecule type" value="mRNA"/>
</dbReference>
<dbReference type="PIR" id="H85058">
    <property type="entry name" value="H85058"/>
</dbReference>
<dbReference type="RefSeq" id="NP_567268.2">
    <property type="nucleotide sequence ID" value="NM_116705.5"/>
</dbReference>
<dbReference type="SMR" id="Q8W4K1"/>
<dbReference type="FunCoup" id="Q8W4K1">
    <property type="interactions" value="1119"/>
</dbReference>
<dbReference type="STRING" id="3702.Q8W4K1"/>
<dbReference type="PaxDb" id="3702-AT4G04670.1"/>
<dbReference type="ProteomicsDB" id="242603"/>
<dbReference type="EnsemblPlants" id="AT4G04670.1">
    <property type="protein sequence ID" value="AT4G04670.1"/>
    <property type="gene ID" value="AT4G04670"/>
</dbReference>
<dbReference type="GeneID" id="825800"/>
<dbReference type="Gramene" id="AT4G04670.1">
    <property type="protein sequence ID" value="AT4G04670.1"/>
    <property type="gene ID" value="AT4G04670"/>
</dbReference>
<dbReference type="KEGG" id="ath:AT4G04670"/>
<dbReference type="Araport" id="AT4G04670"/>
<dbReference type="TAIR" id="AT4G04670">
    <property type="gene designation" value="TRM5C"/>
</dbReference>
<dbReference type="eggNOG" id="KOG0379">
    <property type="taxonomic scope" value="Eukaryota"/>
</dbReference>
<dbReference type="eggNOG" id="KOG1227">
    <property type="taxonomic scope" value="Eukaryota"/>
</dbReference>
<dbReference type="eggNOG" id="KOG1228">
    <property type="taxonomic scope" value="Eukaryota"/>
</dbReference>
<dbReference type="HOGENOM" id="CLU_006768_0_0_1"/>
<dbReference type="InParanoid" id="Q8W4K1"/>
<dbReference type="OMA" id="AVECKDL"/>
<dbReference type="PhylomeDB" id="Q8W4K1"/>
<dbReference type="UniPathway" id="UPA00375"/>
<dbReference type="PRO" id="PR:Q8W4K1"/>
<dbReference type="Proteomes" id="UP000006548">
    <property type="component" value="Chromosome 4"/>
</dbReference>
<dbReference type="ExpressionAtlas" id="Q8W4K1">
    <property type="expression patterns" value="baseline and differential"/>
</dbReference>
<dbReference type="GO" id="GO:0008168">
    <property type="term" value="F:methyltransferase activity"/>
    <property type="evidence" value="ECO:0007669"/>
    <property type="project" value="UniProtKB-KW"/>
</dbReference>
<dbReference type="GO" id="GO:0102522">
    <property type="term" value="F:tRNA 4-demethylwyosine alpha-amino-alpha-carboxypropyltransferase activity"/>
    <property type="evidence" value="ECO:0007669"/>
    <property type="project" value="UniProtKB-EC"/>
</dbReference>
<dbReference type="GO" id="GO:0032259">
    <property type="term" value="P:methylation"/>
    <property type="evidence" value="ECO:0007669"/>
    <property type="project" value="UniProtKB-KW"/>
</dbReference>
<dbReference type="GO" id="GO:0031591">
    <property type="term" value="P:wybutosine biosynthetic process"/>
    <property type="evidence" value="ECO:0000250"/>
    <property type="project" value="TAIR"/>
</dbReference>
<dbReference type="CDD" id="cd02440">
    <property type="entry name" value="AdoMet_MTases"/>
    <property type="match status" value="1"/>
</dbReference>
<dbReference type="FunFam" id="2.120.10.80:FF:000128">
    <property type="entry name" value="tRNA wybutosine-synthesizing protein 2/3/4"/>
    <property type="match status" value="1"/>
</dbReference>
<dbReference type="FunFam" id="3.30.1960.10:FF:000002">
    <property type="entry name" value="tRNA wybutosine-synthesizing protein 2/3/4"/>
    <property type="match status" value="1"/>
</dbReference>
<dbReference type="FunFam" id="3.30.300.110:FF:000003">
    <property type="entry name" value="tRNA wybutosine-synthesizing protein 2/3/4"/>
    <property type="match status" value="1"/>
</dbReference>
<dbReference type="FunFam" id="3.40.50.150:FF:000131">
    <property type="entry name" value="tRNA wybutosine-synthesizing protein 2/3/4"/>
    <property type="match status" value="1"/>
</dbReference>
<dbReference type="Gene3D" id="2.120.10.80">
    <property type="entry name" value="Kelch-type beta propeller"/>
    <property type="match status" value="2"/>
</dbReference>
<dbReference type="Gene3D" id="3.30.300.110">
    <property type="entry name" value="Met-10+ protein-like domains"/>
    <property type="match status" value="1"/>
</dbReference>
<dbReference type="Gene3D" id="3.30.1960.10">
    <property type="entry name" value="tRNA wybutosine-synthesizing-like"/>
    <property type="match status" value="1"/>
</dbReference>
<dbReference type="Gene3D" id="3.40.50.150">
    <property type="entry name" value="Vaccinia Virus protein VP39"/>
    <property type="match status" value="1"/>
</dbReference>
<dbReference type="InterPro" id="IPR015915">
    <property type="entry name" value="Kelch-typ_b-propeller"/>
</dbReference>
<dbReference type="InterPro" id="IPR030382">
    <property type="entry name" value="MeTrfase_TRM5/TYW2"/>
</dbReference>
<dbReference type="InterPro" id="IPR029063">
    <property type="entry name" value="SAM-dependent_MTases_sf"/>
</dbReference>
<dbReference type="InterPro" id="IPR056743">
    <property type="entry name" value="TRM5-TYW2-like_MTfase"/>
</dbReference>
<dbReference type="InterPro" id="IPR056744">
    <property type="entry name" value="TRM5/TYW2-like_N"/>
</dbReference>
<dbReference type="InterPro" id="IPR003827">
    <property type="entry name" value="tRNA_yW-synthesising"/>
</dbReference>
<dbReference type="InterPro" id="IPR036602">
    <property type="entry name" value="tRNA_yW-synthesising-like_sf"/>
</dbReference>
<dbReference type="PANTHER" id="PTHR23245">
    <property type="entry name" value="TRNA METHYLTRANSFERASE"/>
    <property type="match status" value="1"/>
</dbReference>
<dbReference type="PANTHER" id="PTHR23245:SF25">
    <property type="entry name" value="TRNA WYBUTOSINE-SYNTHESIZING PROTEIN 2 HOMOLOG"/>
    <property type="match status" value="1"/>
</dbReference>
<dbReference type="Pfam" id="PF24681">
    <property type="entry name" value="Kelch_KLHDC2_KLHL20_DRC7"/>
    <property type="match status" value="1"/>
</dbReference>
<dbReference type="Pfam" id="PF02475">
    <property type="entry name" value="TRM5-TYW2_MTfase"/>
    <property type="match status" value="1"/>
</dbReference>
<dbReference type="Pfam" id="PF25133">
    <property type="entry name" value="TYW2_N_2"/>
    <property type="match status" value="1"/>
</dbReference>
<dbReference type="Pfam" id="PF02676">
    <property type="entry name" value="TYW3"/>
    <property type="match status" value="1"/>
</dbReference>
<dbReference type="SUPFAM" id="SSF117281">
    <property type="entry name" value="Kelch motif"/>
    <property type="match status" value="1"/>
</dbReference>
<dbReference type="SUPFAM" id="SSF53335">
    <property type="entry name" value="S-adenosyl-L-methionine-dependent methyltransferases"/>
    <property type="match status" value="1"/>
</dbReference>
<dbReference type="SUPFAM" id="SSF111278">
    <property type="entry name" value="SSo0622-like"/>
    <property type="match status" value="1"/>
</dbReference>
<dbReference type="PROSITE" id="PS51684">
    <property type="entry name" value="SAM_MT_TRM5_TYW2"/>
    <property type="match status" value="1"/>
</dbReference>
<accession>Q8W4K1</accession>
<accession>Q9S9V3</accession>
<organism>
    <name type="scientific">Arabidopsis thaliana</name>
    <name type="common">Mouse-ear cress</name>
    <dbReference type="NCBI Taxonomy" id="3702"/>
    <lineage>
        <taxon>Eukaryota</taxon>
        <taxon>Viridiplantae</taxon>
        <taxon>Streptophyta</taxon>
        <taxon>Embryophyta</taxon>
        <taxon>Tracheophyta</taxon>
        <taxon>Spermatophyta</taxon>
        <taxon>Magnoliopsida</taxon>
        <taxon>eudicotyledons</taxon>
        <taxon>Gunneridae</taxon>
        <taxon>Pentapetalae</taxon>
        <taxon>rosids</taxon>
        <taxon>malvids</taxon>
        <taxon>Brassicales</taxon>
        <taxon>Brassicaceae</taxon>
        <taxon>Camelineae</taxon>
        <taxon>Arabidopsis</taxon>
    </lineage>
</organism>
<protein>
    <recommendedName>
        <fullName>tRNA wybutosine-synthesizing protein 2/3/4</fullName>
    </recommendedName>
    <domain>
        <recommendedName>
            <fullName>tRNA wybutosine-synthesizing protein 3 homolog</fullName>
            <shortName>tRNA-yW-synthesizing protein 3</shortName>
            <ecNumber>2.1.1.282</ecNumber>
        </recommendedName>
        <alternativeName>
            <fullName>tRNA(Phe) 7-((3-amino-3-carboxypropyl)-4-demethylwyosine(37)-N(4))-methyltransferase</fullName>
        </alternativeName>
    </domain>
    <domain>
        <recommendedName>
            <fullName>tRNA wybutosine-synthesizing protein 2 homolog</fullName>
            <shortName>tRNA-yW-synthesizing protein 2</shortName>
            <ecNumber>2.5.1.114</ecNumber>
        </recommendedName>
        <alternativeName>
            <fullName>tRNA(Phe) (4-demethylwyosine(37)-C(7)) aminocarboxypropyltransferase</fullName>
        </alternativeName>
    </domain>
</protein>